<gene>
    <name evidence="1" type="primary">rpmI</name>
    <name type="ordered locus">ETA_18390</name>
</gene>
<protein>
    <recommendedName>
        <fullName evidence="1">Large ribosomal subunit protein bL35</fullName>
    </recommendedName>
    <alternativeName>
        <fullName evidence="2">50S ribosomal protein L35</fullName>
    </alternativeName>
</protein>
<evidence type="ECO:0000255" key="1">
    <source>
        <dbReference type="HAMAP-Rule" id="MF_00514"/>
    </source>
</evidence>
<evidence type="ECO:0000305" key="2"/>
<sequence length="65" mass="7283">MPKIKTVRGAAKRFKKTASGGFKRKHANLRHILTKKSTKRKRHLRPKGMVSKGDLGLVIACLPYA</sequence>
<dbReference type="EMBL" id="CU468135">
    <property type="protein sequence ID" value="CAO96885.1"/>
    <property type="molecule type" value="Genomic_DNA"/>
</dbReference>
<dbReference type="RefSeq" id="WP_004157374.1">
    <property type="nucleotide sequence ID" value="NC_010694.1"/>
</dbReference>
<dbReference type="SMR" id="B2VEL8"/>
<dbReference type="STRING" id="465817.ETA_18390"/>
<dbReference type="GeneID" id="97605921"/>
<dbReference type="KEGG" id="eta:ETA_18390"/>
<dbReference type="eggNOG" id="COG0291">
    <property type="taxonomic scope" value="Bacteria"/>
</dbReference>
<dbReference type="HOGENOM" id="CLU_169643_1_1_6"/>
<dbReference type="OrthoDB" id="47476at2"/>
<dbReference type="Proteomes" id="UP000001726">
    <property type="component" value="Chromosome"/>
</dbReference>
<dbReference type="GO" id="GO:0022625">
    <property type="term" value="C:cytosolic large ribosomal subunit"/>
    <property type="evidence" value="ECO:0007669"/>
    <property type="project" value="TreeGrafter"/>
</dbReference>
<dbReference type="GO" id="GO:0003735">
    <property type="term" value="F:structural constituent of ribosome"/>
    <property type="evidence" value="ECO:0007669"/>
    <property type="project" value="InterPro"/>
</dbReference>
<dbReference type="GO" id="GO:0006412">
    <property type="term" value="P:translation"/>
    <property type="evidence" value="ECO:0007669"/>
    <property type="project" value="UniProtKB-UniRule"/>
</dbReference>
<dbReference type="FunFam" id="4.10.410.60:FF:000001">
    <property type="entry name" value="50S ribosomal protein L35"/>
    <property type="match status" value="1"/>
</dbReference>
<dbReference type="Gene3D" id="4.10.410.60">
    <property type="match status" value="1"/>
</dbReference>
<dbReference type="HAMAP" id="MF_00514">
    <property type="entry name" value="Ribosomal_bL35"/>
    <property type="match status" value="1"/>
</dbReference>
<dbReference type="InterPro" id="IPR001706">
    <property type="entry name" value="Ribosomal_bL35"/>
</dbReference>
<dbReference type="InterPro" id="IPR021137">
    <property type="entry name" value="Ribosomal_bL35-like"/>
</dbReference>
<dbReference type="InterPro" id="IPR018265">
    <property type="entry name" value="Ribosomal_bL35_CS"/>
</dbReference>
<dbReference type="InterPro" id="IPR037229">
    <property type="entry name" value="Ribosomal_bL35_sf"/>
</dbReference>
<dbReference type="NCBIfam" id="TIGR00001">
    <property type="entry name" value="rpmI_bact"/>
    <property type="match status" value="1"/>
</dbReference>
<dbReference type="PANTHER" id="PTHR33343">
    <property type="entry name" value="54S RIBOSOMAL PROTEIN BL35M"/>
    <property type="match status" value="1"/>
</dbReference>
<dbReference type="PANTHER" id="PTHR33343:SF1">
    <property type="entry name" value="LARGE RIBOSOMAL SUBUNIT PROTEIN BL35M"/>
    <property type="match status" value="1"/>
</dbReference>
<dbReference type="Pfam" id="PF01632">
    <property type="entry name" value="Ribosomal_L35p"/>
    <property type="match status" value="1"/>
</dbReference>
<dbReference type="PRINTS" id="PR00064">
    <property type="entry name" value="RIBOSOMALL35"/>
</dbReference>
<dbReference type="SUPFAM" id="SSF143034">
    <property type="entry name" value="L35p-like"/>
    <property type="match status" value="1"/>
</dbReference>
<dbReference type="PROSITE" id="PS00936">
    <property type="entry name" value="RIBOSOMAL_L35"/>
    <property type="match status" value="1"/>
</dbReference>
<comment type="similarity">
    <text evidence="1">Belongs to the bacterial ribosomal protein bL35 family.</text>
</comment>
<reference key="1">
    <citation type="journal article" date="2008" name="Environ. Microbiol.">
        <title>The genome of Erwinia tasmaniensis strain Et1/99, a non-pathogenic bacterium in the genus Erwinia.</title>
        <authorList>
            <person name="Kube M."/>
            <person name="Migdoll A.M."/>
            <person name="Mueller I."/>
            <person name="Kuhl H."/>
            <person name="Beck A."/>
            <person name="Reinhardt R."/>
            <person name="Geider K."/>
        </authorList>
    </citation>
    <scope>NUCLEOTIDE SEQUENCE [LARGE SCALE GENOMIC DNA]</scope>
    <source>
        <strain>DSM 17950 / CFBP 7177 / CIP 109463 / NCPPB 4357 / Et1/99</strain>
    </source>
</reference>
<name>RL35_ERWT9</name>
<organism>
    <name type="scientific">Erwinia tasmaniensis (strain DSM 17950 / CFBP 7177 / CIP 109463 / NCPPB 4357 / Et1/99)</name>
    <dbReference type="NCBI Taxonomy" id="465817"/>
    <lineage>
        <taxon>Bacteria</taxon>
        <taxon>Pseudomonadati</taxon>
        <taxon>Pseudomonadota</taxon>
        <taxon>Gammaproteobacteria</taxon>
        <taxon>Enterobacterales</taxon>
        <taxon>Erwiniaceae</taxon>
        <taxon>Erwinia</taxon>
    </lineage>
</organism>
<keyword id="KW-1185">Reference proteome</keyword>
<keyword id="KW-0687">Ribonucleoprotein</keyword>
<keyword id="KW-0689">Ribosomal protein</keyword>
<proteinExistence type="inferred from homology"/>
<feature type="chain" id="PRO_1000127352" description="Large ribosomal subunit protein bL35">
    <location>
        <begin position="1"/>
        <end position="65"/>
    </location>
</feature>
<accession>B2VEL8</accession>